<name>GATP3_ORYSJ</name>
<proteinExistence type="inferred from homology"/>
<keyword id="KW-0032">Aminotransferase</keyword>
<keyword id="KW-0496">Mitochondrion</keyword>
<keyword id="KW-0663">Pyridoxal phosphate</keyword>
<keyword id="KW-1185">Reference proteome</keyword>
<keyword id="KW-0808">Transferase</keyword>
<keyword id="KW-0809">Transit peptide</keyword>
<feature type="transit peptide" description="Mitochondrion" evidence="2">
    <location>
        <begin position="1"/>
        <end position="41"/>
    </location>
</feature>
<feature type="chain" id="PRO_0000416852" description="Probable gamma-aminobutyrate transaminase 3, mitochondrial">
    <location>
        <begin position="42"/>
        <end position="510"/>
    </location>
</feature>
<feature type="binding site" evidence="1">
    <location>
        <begin position="166"/>
        <end position="167"/>
    </location>
    <ligand>
        <name>pyridoxal 5'-phosphate</name>
        <dbReference type="ChEBI" id="CHEBI:597326"/>
    </ligand>
</feature>
<feature type="binding site" evidence="1">
    <location>
        <position position="199"/>
    </location>
    <ligand>
        <name>substrate</name>
    </ligand>
</feature>
<feature type="binding site" evidence="1">
    <location>
        <position position="306"/>
    </location>
    <ligand>
        <name>pyridoxal 5'-phosphate</name>
        <dbReference type="ChEBI" id="CHEBI:597326"/>
    </ligand>
</feature>
<feature type="binding site" evidence="1">
    <location>
        <position position="335"/>
    </location>
    <ligand>
        <name>substrate</name>
    </ligand>
</feature>
<feature type="modified residue" description="N6-(pyridoxal phosphate)lysine" evidence="1">
    <location>
        <position position="335"/>
    </location>
</feature>
<comment type="function">
    <text evidence="1">Transaminase that degrades gamma-amino butyric acid (GABA).</text>
</comment>
<comment type="catalytic activity">
    <reaction>
        <text>4-aminobutanoate + pyruvate = succinate semialdehyde + L-alanine</text>
        <dbReference type="Rhea" id="RHEA:32263"/>
        <dbReference type="ChEBI" id="CHEBI:15361"/>
        <dbReference type="ChEBI" id="CHEBI:57706"/>
        <dbReference type="ChEBI" id="CHEBI:57972"/>
        <dbReference type="ChEBI" id="CHEBI:59888"/>
        <dbReference type="EC" id="2.6.1.96"/>
    </reaction>
</comment>
<comment type="catalytic activity">
    <reaction>
        <text>4-aminobutanoate + glyoxylate = succinate semialdehyde + glycine</text>
        <dbReference type="Rhea" id="RHEA:32267"/>
        <dbReference type="ChEBI" id="CHEBI:36655"/>
        <dbReference type="ChEBI" id="CHEBI:57305"/>
        <dbReference type="ChEBI" id="CHEBI:57706"/>
        <dbReference type="ChEBI" id="CHEBI:59888"/>
        <dbReference type="EC" id="2.6.1.96"/>
    </reaction>
</comment>
<comment type="subcellular location">
    <subcellularLocation>
        <location evidence="3">Mitochondrion</location>
    </subcellularLocation>
</comment>
<comment type="similarity">
    <text evidence="3">Belongs to the class-III pyridoxal-phosphate-dependent aminotransferase family.</text>
</comment>
<sequence>MICRSLLLLRSNAASKASNIVKHVAATGCLPKYSSEAPARYFSSEPSLQVDSTEENGFKGHGMLAPFTAGWQSTDLHPLVIDRSEGSYVYDINGKKYIDALAGLWSTALGGNEPRLIKAATDQLNKLPFYHSFWNRTTKPSLDLANEILSMFTAREMGKIFFTNSGSEANDSQVKLVWYYNNALGRPNKKKFIARSKSYHGSTLVSASLSGLPALHQKFDLPAPFVLHTDCPHYWRFHLPDETEEEFATRLATNLENLILKEGPETIAAFIAEPVMGAGGVIPPPKTYFEKIQAVLKKYDILLIADEVITAFGRLGTMFGCDMYDIKPDLVSIAKALSSAYMPIGAILVSPEITDVIYSQSNKLGSFAHGFTYSGHPVSCAVAIEALKIYKERNIIEHVQKIAPRFQEGIKAFSGSPIVGEIRGLGLILGTEFVDNKSPNDPFPAEWGVGSLFGAECEKRGMLIRVAGDNIMLSPPLIMTPDEVEEIICKYGDALKATEERIAELKAKRG</sequence>
<gene>
    <name type="ordered locus">Os08g0205900</name>
    <name type="ordered locus">LOC_Os08g10510</name>
    <name type="ORF">OJ1119_C05.10</name>
    <name type="ORF">OsJ_26408</name>
    <name type="ORF">P0486F07.39</name>
</gene>
<evidence type="ECO:0000250" key="1"/>
<evidence type="ECO:0000255" key="2"/>
<evidence type="ECO:0000305" key="3"/>
<reference key="1">
    <citation type="journal article" date="2005" name="Nature">
        <title>The map-based sequence of the rice genome.</title>
        <authorList>
            <consortium name="International rice genome sequencing project (IRGSP)"/>
        </authorList>
    </citation>
    <scope>NUCLEOTIDE SEQUENCE [LARGE SCALE GENOMIC DNA]</scope>
    <source>
        <strain>cv. Nipponbare</strain>
    </source>
</reference>
<reference key="2">
    <citation type="journal article" date="2008" name="Nucleic Acids Res.">
        <title>The rice annotation project database (RAP-DB): 2008 update.</title>
        <authorList>
            <consortium name="The rice annotation project (RAP)"/>
        </authorList>
    </citation>
    <scope>GENOME REANNOTATION</scope>
    <source>
        <strain>cv. Nipponbare</strain>
    </source>
</reference>
<reference key="3">
    <citation type="journal article" date="2013" name="Rice">
        <title>Improvement of the Oryza sativa Nipponbare reference genome using next generation sequence and optical map data.</title>
        <authorList>
            <person name="Kawahara Y."/>
            <person name="de la Bastide M."/>
            <person name="Hamilton J.P."/>
            <person name="Kanamori H."/>
            <person name="McCombie W.R."/>
            <person name="Ouyang S."/>
            <person name="Schwartz D.C."/>
            <person name="Tanaka T."/>
            <person name="Wu J."/>
            <person name="Zhou S."/>
            <person name="Childs K.L."/>
            <person name="Davidson R.M."/>
            <person name="Lin H."/>
            <person name="Quesada-Ocampo L."/>
            <person name="Vaillancourt B."/>
            <person name="Sakai H."/>
            <person name="Lee S.S."/>
            <person name="Kim J."/>
            <person name="Numa H."/>
            <person name="Itoh T."/>
            <person name="Buell C.R."/>
            <person name="Matsumoto T."/>
        </authorList>
    </citation>
    <scope>GENOME REANNOTATION</scope>
    <source>
        <strain>cv. Nipponbare</strain>
    </source>
</reference>
<reference key="4">
    <citation type="journal article" date="2005" name="PLoS Biol.">
        <title>The genomes of Oryza sativa: a history of duplications.</title>
        <authorList>
            <person name="Yu J."/>
            <person name="Wang J."/>
            <person name="Lin W."/>
            <person name="Li S."/>
            <person name="Li H."/>
            <person name="Zhou J."/>
            <person name="Ni P."/>
            <person name="Dong W."/>
            <person name="Hu S."/>
            <person name="Zeng C."/>
            <person name="Zhang J."/>
            <person name="Zhang Y."/>
            <person name="Li R."/>
            <person name="Xu Z."/>
            <person name="Li S."/>
            <person name="Li X."/>
            <person name="Zheng H."/>
            <person name="Cong L."/>
            <person name="Lin L."/>
            <person name="Yin J."/>
            <person name="Geng J."/>
            <person name="Li G."/>
            <person name="Shi J."/>
            <person name="Liu J."/>
            <person name="Lv H."/>
            <person name="Li J."/>
            <person name="Wang J."/>
            <person name="Deng Y."/>
            <person name="Ran L."/>
            <person name="Shi X."/>
            <person name="Wang X."/>
            <person name="Wu Q."/>
            <person name="Li C."/>
            <person name="Ren X."/>
            <person name="Wang J."/>
            <person name="Wang X."/>
            <person name="Li D."/>
            <person name="Liu D."/>
            <person name="Zhang X."/>
            <person name="Ji Z."/>
            <person name="Zhao W."/>
            <person name="Sun Y."/>
            <person name="Zhang Z."/>
            <person name="Bao J."/>
            <person name="Han Y."/>
            <person name="Dong L."/>
            <person name="Ji J."/>
            <person name="Chen P."/>
            <person name="Wu S."/>
            <person name="Liu J."/>
            <person name="Xiao Y."/>
            <person name="Bu D."/>
            <person name="Tan J."/>
            <person name="Yang L."/>
            <person name="Ye C."/>
            <person name="Zhang J."/>
            <person name="Xu J."/>
            <person name="Zhou Y."/>
            <person name="Yu Y."/>
            <person name="Zhang B."/>
            <person name="Zhuang S."/>
            <person name="Wei H."/>
            <person name="Liu B."/>
            <person name="Lei M."/>
            <person name="Yu H."/>
            <person name="Li Y."/>
            <person name="Xu H."/>
            <person name="Wei S."/>
            <person name="He X."/>
            <person name="Fang L."/>
            <person name="Zhang Z."/>
            <person name="Zhang Y."/>
            <person name="Huang X."/>
            <person name="Su Z."/>
            <person name="Tong W."/>
            <person name="Li J."/>
            <person name="Tong Z."/>
            <person name="Li S."/>
            <person name="Ye J."/>
            <person name="Wang L."/>
            <person name="Fang L."/>
            <person name="Lei T."/>
            <person name="Chen C.-S."/>
            <person name="Chen H.-C."/>
            <person name="Xu Z."/>
            <person name="Li H."/>
            <person name="Huang H."/>
            <person name="Zhang F."/>
            <person name="Xu H."/>
            <person name="Li N."/>
            <person name="Zhao C."/>
            <person name="Li S."/>
            <person name="Dong L."/>
            <person name="Huang Y."/>
            <person name="Li L."/>
            <person name="Xi Y."/>
            <person name="Qi Q."/>
            <person name="Li W."/>
            <person name="Zhang B."/>
            <person name="Hu W."/>
            <person name="Zhang Y."/>
            <person name="Tian X."/>
            <person name="Jiao Y."/>
            <person name="Liang X."/>
            <person name="Jin J."/>
            <person name="Gao L."/>
            <person name="Zheng W."/>
            <person name="Hao B."/>
            <person name="Liu S.-M."/>
            <person name="Wang W."/>
            <person name="Yuan L."/>
            <person name="Cao M."/>
            <person name="McDermott J."/>
            <person name="Samudrala R."/>
            <person name="Wang J."/>
            <person name="Wong G.K.-S."/>
            <person name="Yang H."/>
        </authorList>
    </citation>
    <scope>NUCLEOTIDE SEQUENCE [LARGE SCALE GENOMIC DNA]</scope>
    <source>
        <strain>cv. Nipponbare</strain>
    </source>
</reference>
<protein>
    <recommendedName>
        <fullName>Probable gamma-aminobutyrate transaminase 3, mitochondrial</fullName>
        <ecNumber>2.6.1.96</ecNumber>
    </recommendedName>
</protein>
<organism>
    <name type="scientific">Oryza sativa subsp. japonica</name>
    <name type="common">Rice</name>
    <dbReference type="NCBI Taxonomy" id="39947"/>
    <lineage>
        <taxon>Eukaryota</taxon>
        <taxon>Viridiplantae</taxon>
        <taxon>Streptophyta</taxon>
        <taxon>Embryophyta</taxon>
        <taxon>Tracheophyta</taxon>
        <taxon>Spermatophyta</taxon>
        <taxon>Magnoliopsida</taxon>
        <taxon>Liliopsida</taxon>
        <taxon>Poales</taxon>
        <taxon>Poaceae</taxon>
        <taxon>BOP clade</taxon>
        <taxon>Oryzoideae</taxon>
        <taxon>Oryzeae</taxon>
        <taxon>Oryzinae</taxon>
        <taxon>Oryza</taxon>
        <taxon>Oryza sativa</taxon>
    </lineage>
</organism>
<dbReference type="EC" id="2.6.1.96"/>
<dbReference type="EMBL" id="AP003875">
    <property type="protein sequence ID" value="BAD11549.1"/>
    <property type="molecule type" value="Genomic_DNA"/>
</dbReference>
<dbReference type="EMBL" id="AP004565">
    <property type="protein sequence ID" value="BAD05337.1"/>
    <property type="molecule type" value="Genomic_DNA"/>
</dbReference>
<dbReference type="EMBL" id="AP008214">
    <property type="protein sequence ID" value="BAF23151.1"/>
    <property type="molecule type" value="Genomic_DNA"/>
</dbReference>
<dbReference type="EMBL" id="AP014964">
    <property type="protein sequence ID" value="BAT04302.1"/>
    <property type="molecule type" value="Genomic_DNA"/>
</dbReference>
<dbReference type="EMBL" id="CM000145">
    <property type="protein sequence ID" value="EEE68226.1"/>
    <property type="molecule type" value="Genomic_DNA"/>
</dbReference>
<dbReference type="RefSeq" id="XP_015648304.1">
    <property type="nucleotide sequence ID" value="XM_015792818.1"/>
</dbReference>
<dbReference type="SMR" id="Q6ZCF0"/>
<dbReference type="FunCoup" id="Q6ZCF0">
    <property type="interactions" value="932"/>
</dbReference>
<dbReference type="STRING" id="39947.Q6ZCF0"/>
<dbReference type="PaxDb" id="39947-Q6ZCF0"/>
<dbReference type="EnsemblPlants" id="Os08t0205900-01">
    <property type="protein sequence ID" value="Os08t0205900-01"/>
    <property type="gene ID" value="Os08g0205900"/>
</dbReference>
<dbReference type="Gramene" id="Os08t0205900-01">
    <property type="protein sequence ID" value="Os08t0205900-01"/>
    <property type="gene ID" value="Os08g0205900"/>
</dbReference>
<dbReference type="KEGG" id="dosa:Os08g0205900"/>
<dbReference type="eggNOG" id="KOG1404">
    <property type="taxonomic scope" value="Eukaryota"/>
</dbReference>
<dbReference type="HOGENOM" id="CLU_016922_4_1_1"/>
<dbReference type="InParanoid" id="Q6ZCF0"/>
<dbReference type="OMA" id="YQNFPKT"/>
<dbReference type="OrthoDB" id="425114at2759"/>
<dbReference type="PlantReactome" id="R-OSA-1119458">
    <property type="pathway name" value="Glutamate degradation"/>
</dbReference>
<dbReference type="PlantReactome" id="R-OSA-1119610">
    <property type="pathway name" value="Biotin biosynthesis II"/>
</dbReference>
<dbReference type="Proteomes" id="UP000000763">
    <property type="component" value="Chromosome 8"/>
</dbReference>
<dbReference type="Proteomes" id="UP000007752">
    <property type="component" value="Chromosome 8"/>
</dbReference>
<dbReference type="Proteomes" id="UP000059680">
    <property type="component" value="Chromosome 8"/>
</dbReference>
<dbReference type="GO" id="GO:0005739">
    <property type="term" value="C:mitochondrion"/>
    <property type="evidence" value="ECO:0007669"/>
    <property type="project" value="UniProtKB-SubCell"/>
</dbReference>
<dbReference type="GO" id="GO:0034387">
    <property type="term" value="F:4-aminobutyrate:pyruvate transaminase activity"/>
    <property type="evidence" value="ECO:0007669"/>
    <property type="project" value="UniProtKB-EC"/>
</dbReference>
<dbReference type="GO" id="GO:0004015">
    <property type="term" value="F:adenosylmethionine-8-amino-7-oxononanoate transaminase activity"/>
    <property type="evidence" value="ECO:0000318"/>
    <property type="project" value="GO_Central"/>
</dbReference>
<dbReference type="GO" id="GO:0030170">
    <property type="term" value="F:pyridoxal phosphate binding"/>
    <property type="evidence" value="ECO:0007669"/>
    <property type="project" value="InterPro"/>
</dbReference>
<dbReference type="GO" id="GO:0009102">
    <property type="term" value="P:biotin biosynthetic process"/>
    <property type="evidence" value="ECO:0000318"/>
    <property type="project" value="GO_Central"/>
</dbReference>
<dbReference type="GO" id="GO:0009448">
    <property type="term" value="P:gamma-aminobutyric acid metabolic process"/>
    <property type="evidence" value="ECO:0000318"/>
    <property type="project" value="GO_Central"/>
</dbReference>
<dbReference type="CDD" id="cd00610">
    <property type="entry name" value="OAT_like"/>
    <property type="match status" value="1"/>
</dbReference>
<dbReference type="FunFam" id="3.40.640.10:FF:000014">
    <property type="entry name" value="Adenosylmethionine-8-amino-7-oxononanoate aminotransferase, probable"/>
    <property type="match status" value="1"/>
</dbReference>
<dbReference type="FunFam" id="3.90.1150.10:FF:000280">
    <property type="entry name" value="Class III aminotransferase"/>
    <property type="match status" value="1"/>
</dbReference>
<dbReference type="Gene3D" id="3.90.1150.10">
    <property type="entry name" value="Aspartate Aminotransferase, domain 1"/>
    <property type="match status" value="1"/>
</dbReference>
<dbReference type="Gene3D" id="3.40.640.10">
    <property type="entry name" value="Type I PLP-dependent aspartate aminotransferase-like (Major domain)"/>
    <property type="match status" value="1"/>
</dbReference>
<dbReference type="InterPro" id="IPR005814">
    <property type="entry name" value="Aminotrans_3"/>
</dbReference>
<dbReference type="InterPro" id="IPR049704">
    <property type="entry name" value="Aminotrans_3_PPA_site"/>
</dbReference>
<dbReference type="InterPro" id="IPR015424">
    <property type="entry name" value="PyrdxlP-dep_Trfase"/>
</dbReference>
<dbReference type="InterPro" id="IPR015421">
    <property type="entry name" value="PyrdxlP-dep_Trfase_major"/>
</dbReference>
<dbReference type="InterPro" id="IPR015422">
    <property type="entry name" value="PyrdxlP-dep_Trfase_small"/>
</dbReference>
<dbReference type="NCBIfam" id="NF004767">
    <property type="entry name" value="PRK06105.1"/>
    <property type="match status" value="1"/>
</dbReference>
<dbReference type="PANTHER" id="PTHR42684">
    <property type="entry name" value="ADENOSYLMETHIONINE-8-AMINO-7-OXONONANOATE AMINOTRANSFERASE"/>
    <property type="match status" value="1"/>
</dbReference>
<dbReference type="PANTHER" id="PTHR42684:SF3">
    <property type="entry name" value="ADENOSYLMETHIONINE-8-AMINO-7-OXONONANOATE AMINOTRANSFERASE"/>
    <property type="match status" value="1"/>
</dbReference>
<dbReference type="Pfam" id="PF00202">
    <property type="entry name" value="Aminotran_3"/>
    <property type="match status" value="1"/>
</dbReference>
<dbReference type="SUPFAM" id="SSF53383">
    <property type="entry name" value="PLP-dependent transferases"/>
    <property type="match status" value="1"/>
</dbReference>
<dbReference type="PROSITE" id="PS00600">
    <property type="entry name" value="AA_TRANSFER_CLASS_3"/>
    <property type="match status" value="1"/>
</dbReference>
<accession>Q6ZCF0</accession>
<accession>A0A0P0XD35</accession>